<name>CAIE_SALPK</name>
<evidence type="ECO:0000255" key="1">
    <source>
        <dbReference type="HAMAP-Rule" id="MF_01525"/>
    </source>
</evidence>
<evidence type="ECO:0000256" key="2">
    <source>
        <dbReference type="SAM" id="MobiDB-lite"/>
    </source>
</evidence>
<reference key="1">
    <citation type="journal article" date="2009" name="BMC Genomics">
        <title>Pseudogene accumulation in the evolutionary histories of Salmonella enterica serovars Paratyphi A and Typhi.</title>
        <authorList>
            <person name="Holt K.E."/>
            <person name="Thomson N.R."/>
            <person name="Wain J."/>
            <person name="Langridge G.C."/>
            <person name="Hasan R."/>
            <person name="Bhutta Z.A."/>
            <person name="Quail M.A."/>
            <person name="Norbertczak H."/>
            <person name="Walker D."/>
            <person name="Simmonds M."/>
            <person name="White B."/>
            <person name="Bason N."/>
            <person name="Mungall K."/>
            <person name="Dougan G."/>
            <person name="Parkhill J."/>
        </authorList>
    </citation>
    <scope>NUCLEOTIDE SEQUENCE [LARGE SCALE GENOMIC DNA]</scope>
    <source>
        <strain>AKU_12601</strain>
    </source>
</reference>
<proteinExistence type="inferred from homology"/>
<keyword id="KW-0677">Repeat</keyword>
<keyword id="KW-0808">Transferase</keyword>
<dbReference type="EMBL" id="FM200053">
    <property type="protein sequence ID" value="CAR58177.1"/>
    <property type="molecule type" value="Genomic_DNA"/>
</dbReference>
<dbReference type="RefSeq" id="WP_000122863.1">
    <property type="nucleotide sequence ID" value="NC_011147.1"/>
</dbReference>
<dbReference type="SMR" id="B5BL53"/>
<dbReference type="KEGG" id="sek:SSPA0066"/>
<dbReference type="HOGENOM" id="CLU_064827_4_2_6"/>
<dbReference type="UniPathway" id="UPA00117"/>
<dbReference type="Proteomes" id="UP000001869">
    <property type="component" value="Chromosome"/>
</dbReference>
<dbReference type="GO" id="GO:0016740">
    <property type="term" value="F:transferase activity"/>
    <property type="evidence" value="ECO:0007669"/>
    <property type="project" value="UniProtKB-KW"/>
</dbReference>
<dbReference type="GO" id="GO:0009437">
    <property type="term" value="P:carnitine metabolic process"/>
    <property type="evidence" value="ECO:0007669"/>
    <property type="project" value="UniProtKB-UniRule"/>
</dbReference>
<dbReference type="CDD" id="cd04745">
    <property type="entry name" value="LbH_paaY_like"/>
    <property type="match status" value="1"/>
</dbReference>
<dbReference type="FunFam" id="2.160.10.10:FF:000012">
    <property type="entry name" value="Carnitine operon protein CaiE"/>
    <property type="match status" value="1"/>
</dbReference>
<dbReference type="Gene3D" id="2.160.10.10">
    <property type="entry name" value="Hexapeptide repeat proteins"/>
    <property type="match status" value="1"/>
</dbReference>
<dbReference type="HAMAP" id="MF_01525">
    <property type="entry name" value="CaiE"/>
    <property type="match status" value="1"/>
</dbReference>
<dbReference type="InterPro" id="IPR023446">
    <property type="entry name" value="CaiE"/>
</dbReference>
<dbReference type="InterPro" id="IPR001451">
    <property type="entry name" value="Hexapep"/>
</dbReference>
<dbReference type="InterPro" id="IPR050484">
    <property type="entry name" value="Transf_Hexapept/Carb_Anhydrase"/>
</dbReference>
<dbReference type="InterPro" id="IPR011004">
    <property type="entry name" value="Trimer_LpxA-like_sf"/>
</dbReference>
<dbReference type="NCBIfam" id="NF010150">
    <property type="entry name" value="PRK13627.1"/>
    <property type="match status" value="1"/>
</dbReference>
<dbReference type="PANTHER" id="PTHR13061">
    <property type="entry name" value="DYNACTIN SUBUNIT P25"/>
    <property type="match status" value="1"/>
</dbReference>
<dbReference type="PANTHER" id="PTHR13061:SF29">
    <property type="entry name" value="GAMMA CARBONIC ANHYDRASE-LIKE 1, MITOCHONDRIAL-RELATED"/>
    <property type="match status" value="1"/>
</dbReference>
<dbReference type="Pfam" id="PF00132">
    <property type="entry name" value="Hexapep"/>
    <property type="match status" value="2"/>
</dbReference>
<dbReference type="SUPFAM" id="SSF51161">
    <property type="entry name" value="Trimeric LpxA-like enzymes"/>
    <property type="match status" value="1"/>
</dbReference>
<feature type="chain" id="PRO_1000200936" description="Carnitine operon protein CaiE">
    <location>
        <begin position="1"/>
        <end position="198"/>
    </location>
</feature>
<feature type="region of interest" description="Disordered" evidence="2">
    <location>
        <begin position="179"/>
        <end position="198"/>
    </location>
</feature>
<feature type="compositionally biased region" description="Basic and acidic residues" evidence="2">
    <location>
        <begin position="180"/>
        <end position="198"/>
    </location>
</feature>
<organism>
    <name type="scientific">Salmonella paratyphi A (strain AKU_12601)</name>
    <dbReference type="NCBI Taxonomy" id="554290"/>
    <lineage>
        <taxon>Bacteria</taxon>
        <taxon>Pseudomonadati</taxon>
        <taxon>Pseudomonadota</taxon>
        <taxon>Gammaproteobacteria</taxon>
        <taxon>Enterobacterales</taxon>
        <taxon>Enterobacteriaceae</taxon>
        <taxon>Salmonella</taxon>
    </lineage>
</organism>
<gene>
    <name evidence="1" type="primary">caiE</name>
    <name type="ordered locus">SSPA0066</name>
</gene>
<accession>B5BL53</accession>
<protein>
    <recommendedName>
        <fullName evidence="1">Carnitine operon protein CaiE</fullName>
    </recommendedName>
</protein>
<sequence>MSYYAFEGLIPVVHPDAFVHPSAVLIGDVIVGAGVYIGPLASLRGDYGRLILEAGSNLQDGCIMHGYCDTDTIVHENGHIGHGAILHGCVVGRDALVGMNSVIMDGAVIGEESIVAAMSFVKAGFQGEARQLLVGSPARVLRQVTDQELHWKRLNTKEYQDLAIRCRTGLSETKPLTQVEENRPRLKGTTDVKPKSAQ</sequence>
<comment type="function">
    <text evidence="1">Overproduction of CaiE stimulates the activity of CaiB and CaiD.</text>
</comment>
<comment type="pathway">
    <text evidence="1">Amine and polyamine metabolism; carnitine metabolism.</text>
</comment>
<comment type="similarity">
    <text evidence="1">Belongs to the transferase hexapeptide repeat family.</text>
</comment>